<keyword id="KW-0021">Allosteric enzyme</keyword>
<keyword id="KW-0067">ATP-binding</keyword>
<keyword id="KW-0963">Cytoplasm</keyword>
<keyword id="KW-0324">Glycolysis</keyword>
<keyword id="KW-0418">Kinase</keyword>
<keyword id="KW-0460">Magnesium</keyword>
<keyword id="KW-0479">Metal-binding</keyword>
<keyword id="KW-0547">Nucleotide-binding</keyword>
<keyword id="KW-0808">Transferase</keyword>
<protein>
    <recommendedName>
        <fullName evidence="1">ATP-dependent 6-phosphofructokinase</fullName>
        <shortName evidence="1">ATP-PFK</shortName>
        <shortName evidence="1">Phosphofructokinase</shortName>
        <ecNumber evidence="1">2.7.1.11</ecNumber>
    </recommendedName>
    <alternativeName>
        <fullName evidence="1">Phosphohexokinase</fullName>
    </alternativeName>
</protein>
<dbReference type="EC" id="2.7.1.11" evidence="1"/>
<dbReference type="EMBL" id="CP000962">
    <property type="protein sequence ID" value="ACA55131.1"/>
    <property type="molecule type" value="Genomic_DNA"/>
</dbReference>
<dbReference type="RefSeq" id="WP_003360293.1">
    <property type="nucleotide sequence ID" value="NC_010520.1"/>
</dbReference>
<dbReference type="SMR" id="B1L266"/>
<dbReference type="KEGG" id="cbl:CLK_2805"/>
<dbReference type="HOGENOM" id="CLU_020655_0_1_9"/>
<dbReference type="UniPathway" id="UPA00109">
    <property type="reaction ID" value="UER00182"/>
</dbReference>
<dbReference type="GO" id="GO:0005945">
    <property type="term" value="C:6-phosphofructokinase complex"/>
    <property type="evidence" value="ECO:0007669"/>
    <property type="project" value="TreeGrafter"/>
</dbReference>
<dbReference type="GO" id="GO:0003872">
    <property type="term" value="F:6-phosphofructokinase activity"/>
    <property type="evidence" value="ECO:0007669"/>
    <property type="project" value="UniProtKB-UniRule"/>
</dbReference>
<dbReference type="GO" id="GO:0016208">
    <property type="term" value="F:AMP binding"/>
    <property type="evidence" value="ECO:0007669"/>
    <property type="project" value="TreeGrafter"/>
</dbReference>
<dbReference type="GO" id="GO:0005524">
    <property type="term" value="F:ATP binding"/>
    <property type="evidence" value="ECO:0007669"/>
    <property type="project" value="UniProtKB-KW"/>
</dbReference>
<dbReference type="GO" id="GO:0070095">
    <property type="term" value="F:fructose-6-phosphate binding"/>
    <property type="evidence" value="ECO:0007669"/>
    <property type="project" value="TreeGrafter"/>
</dbReference>
<dbReference type="GO" id="GO:0042802">
    <property type="term" value="F:identical protein binding"/>
    <property type="evidence" value="ECO:0007669"/>
    <property type="project" value="TreeGrafter"/>
</dbReference>
<dbReference type="GO" id="GO:0046872">
    <property type="term" value="F:metal ion binding"/>
    <property type="evidence" value="ECO:0007669"/>
    <property type="project" value="UniProtKB-KW"/>
</dbReference>
<dbReference type="GO" id="GO:0048029">
    <property type="term" value="F:monosaccharide binding"/>
    <property type="evidence" value="ECO:0007669"/>
    <property type="project" value="TreeGrafter"/>
</dbReference>
<dbReference type="GO" id="GO:0061621">
    <property type="term" value="P:canonical glycolysis"/>
    <property type="evidence" value="ECO:0007669"/>
    <property type="project" value="TreeGrafter"/>
</dbReference>
<dbReference type="GO" id="GO:0030388">
    <property type="term" value="P:fructose 1,6-bisphosphate metabolic process"/>
    <property type="evidence" value="ECO:0007669"/>
    <property type="project" value="TreeGrafter"/>
</dbReference>
<dbReference type="GO" id="GO:0006002">
    <property type="term" value="P:fructose 6-phosphate metabolic process"/>
    <property type="evidence" value="ECO:0007669"/>
    <property type="project" value="InterPro"/>
</dbReference>
<dbReference type="FunFam" id="3.40.50.450:FF:000001">
    <property type="entry name" value="ATP-dependent 6-phosphofructokinase"/>
    <property type="match status" value="1"/>
</dbReference>
<dbReference type="FunFam" id="3.40.50.460:FF:000002">
    <property type="entry name" value="ATP-dependent 6-phosphofructokinase"/>
    <property type="match status" value="1"/>
</dbReference>
<dbReference type="Gene3D" id="3.40.50.450">
    <property type="match status" value="1"/>
</dbReference>
<dbReference type="Gene3D" id="3.40.50.460">
    <property type="entry name" value="Phosphofructokinase domain"/>
    <property type="match status" value="1"/>
</dbReference>
<dbReference type="HAMAP" id="MF_00339">
    <property type="entry name" value="Phosphofructokinase_I_B1"/>
    <property type="match status" value="1"/>
</dbReference>
<dbReference type="InterPro" id="IPR022953">
    <property type="entry name" value="ATP_PFK"/>
</dbReference>
<dbReference type="InterPro" id="IPR012003">
    <property type="entry name" value="ATP_PFK_prok-type"/>
</dbReference>
<dbReference type="InterPro" id="IPR012828">
    <property type="entry name" value="PFKA_ATP_prok"/>
</dbReference>
<dbReference type="InterPro" id="IPR015912">
    <property type="entry name" value="Phosphofructokinase_CS"/>
</dbReference>
<dbReference type="InterPro" id="IPR000023">
    <property type="entry name" value="Phosphofructokinase_dom"/>
</dbReference>
<dbReference type="InterPro" id="IPR035966">
    <property type="entry name" value="PKF_sf"/>
</dbReference>
<dbReference type="NCBIfam" id="TIGR02482">
    <property type="entry name" value="PFKA_ATP"/>
    <property type="match status" value="1"/>
</dbReference>
<dbReference type="NCBIfam" id="NF002872">
    <property type="entry name" value="PRK03202.1"/>
    <property type="match status" value="1"/>
</dbReference>
<dbReference type="PANTHER" id="PTHR13697:SF4">
    <property type="entry name" value="ATP-DEPENDENT 6-PHOSPHOFRUCTOKINASE"/>
    <property type="match status" value="1"/>
</dbReference>
<dbReference type="PANTHER" id="PTHR13697">
    <property type="entry name" value="PHOSPHOFRUCTOKINASE"/>
    <property type="match status" value="1"/>
</dbReference>
<dbReference type="Pfam" id="PF00365">
    <property type="entry name" value="PFK"/>
    <property type="match status" value="1"/>
</dbReference>
<dbReference type="PIRSF" id="PIRSF000532">
    <property type="entry name" value="ATP_PFK_prok"/>
    <property type="match status" value="1"/>
</dbReference>
<dbReference type="PRINTS" id="PR00476">
    <property type="entry name" value="PHFRCTKINASE"/>
</dbReference>
<dbReference type="SUPFAM" id="SSF53784">
    <property type="entry name" value="Phosphofructokinase"/>
    <property type="match status" value="1"/>
</dbReference>
<dbReference type="PROSITE" id="PS00433">
    <property type="entry name" value="PHOSPHOFRUCTOKINASE"/>
    <property type="match status" value="1"/>
</dbReference>
<name>PFKA_CLOBM</name>
<gene>
    <name evidence="1" type="primary">pfkA</name>
    <name type="ordered locus">CLK_2805</name>
</gene>
<evidence type="ECO:0000255" key="1">
    <source>
        <dbReference type="HAMAP-Rule" id="MF_00339"/>
    </source>
</evidence>
<feature type="chain" id="PRO_1000120035" description="ATP-dependent 6-phosphofructokinase">
    <location>
        <begin position="1"/>
        <end position="319"/>
    </location>
</feature>
<feature type="active site" description="Proton acceptor" evidence="1">
    <location>
        <position position="127"/>
    </location>
</feature>
<feature type="binding site" evidence="1">
    <location>
        <position position="11"/>
    </location>
    <ligand>
        <name>ATP</name>
        <dbReference type="ChEBI" id="CHEBI:30616"/>
    </ligand>
</feature>
<feature type="binding site" evidence="1">
    <location>
        <begin position="21"/>
        <end position="25"/>
    </location>
    <ligand>
        <name>ADP</name>
        <dbReference type="ChEBI" id="CHEBI:456216"/>
        <note>allosteric activator; ligand shared between dimeric partners</note>
    </ligand>
</feature>
<feature type="binding site" evidence="1">
    <location>
        <begin position="72"/>
        <end position="73"/>
    </location>
    <ligand>
        <name>ATP</name>
        <dbReference type="ChEBI" id="CHEBI:30616"/>
    </ligand>
</feature>
<feature type="binding site" evidence="1">
    <location>
        <begin position="102"/>
        <end position="105"/>
    </location>
    <ligand>
        <name>ATP</name>
        <dbReference type="ChEBI" id="CHEBI:30616"/>
    </ligand>
</feature>
<feature type="binding site" evidence="1">
    <location>
        <position position="103"/>
    </location>
    <ligand>
        <name>Mg(2+)</name>
        <dbReference type="ChEBI" id="CHEBI:18420"/>
        <note>catalytic</note>
    </ligand>
</feature>
<feature type="binding site" description="in other chain" evidence="1">
    <location>
        <begin position="125"/>
        <end position="127"/>
    </location>
    <ligand>
        <name>substrate</name>
        <note>ligand shared between dimeric partners</note>
    </ligand>
</feature>
<feature type="binding site" description="in other chain" evidence="1">
    <location>
        <position position="154"/>
    </location>
    <ligand>
        <name>ADP</name>
        <dbReference type="ChEBI" id="CHEBI:456216"/>
        <note>allosteric activator; ligand shared between dimeric partners</note>
    </ligand>
</feature>
<feature type="binding site" evidence="1">
    <location>
        <position position="162"/>
    </location>
    <ligand>
        <name>substrate</name>
        <note>ligand shared between dimeric partners</note>
    </ligand>
</feature>
<feature type="binding site" description="in other chain" evidence="1">
    <location>
        <begin position="169"/>
        <end position="171"/>
    </location>
    <ligand>
        <name>substrate</name>
        <note>ligand shared between dimeric partners</note>
    </ligand>
</feature>
<feature type="binding site" description="in other chain" evidence="1">
    <location>
        <begin position="185"/>
        <end position="187"/>
    </location>
    <ligand>
        <name>ADP</name>
        <dbReference type="ChEBI" id="CHEBI:456216"/>
        <note>allosteric activator; ligand shared between dimeric partners</note>
    </ligand>
</feature>
<feature type="binding site" description="in other chain" evidence="1">
    <location>
        <position position="211"/>
    </location>
    <ligand>
        <name>ADP</name>
        <dbReference type="ChEBI" id="CHEBI:456216"/>
        <note>allosteric activator; ligand shared between dimeric partners</note>
    </ligand>
</feature>
<feature type="binding site" description="in other chain" evidence="1">
    <location>
        <begin position="213"/>
        <end position="215"/>
    </location>
    <ligand>
        <name>ADP</name>
        <dbReference type="ChEBI" id="CHEBI:456216"/>
        <note>allosteric activator; ligand shared between dimeric partners</note>
    </ligand>
</feature>
<feature type="binding site" description="in other chain" evidence="1">
    <location>
        <position position="222"/>
    </location>
    <ligand>
        <name>substrate</name>
        <note>ligand shared between dimeric partners</note>
    </ligand>
</feature>
<feature type="binding site" evidence="1">
    <location>
        <position position="243"/>
    </location>
    <ligand>
        <name>substrate</name>
        <note>ligand shared between dimeric partners</note>
    </ligand>
</feature>
<feature type="binding site" description="in other chain" evidence="1">
    <location>
        <begin position="249"/>
        <end position="252"/>
    </location>
    <ligand>
        <name>substrate</name>
        <note>ligand shared between dimeric partners</note>
    </ligand>
</feature>
<accession>B1L266</accession>
<proteinExistence type="inferred from homology"/>
<comment type="function">
    <text evidence="1">Catalyzes the phosphorylation of D-fructose 6-phosphate to fructose 1,6-bisphosphate by ATP, the first committing step of glycolysis.</text>
</comment>
<comment type="catalytic activity">
    <reaction evidence="1">
        <text>beta-D-fructose 6-phosphate + ATP = beta-D-fructose 1,6-bisphosphate + ADP + H(+)</text>
        <dbReference type="Rhea" id="RHEA:16109"/>
        <dbReference type="ChEBI" id="CHEBI:15378"/>
        <dbReference type="ChEBI" id="CHEBI:30616"/>
        <dbReference type="ChEBI" id="CHEBI:32966"/>
        <dbReference type="ChEBI" id="CHEBI:57634"/>
        <dbReference type="ChEBI" id="CHEBI:456216"/>
        <dbReference type="EC" id="2.7.1.11"/>
    </reaction>
</comment>
<comment type="cofactor">
    <cofactor evidence="1">
        <name>Mg(2+)</name>
        <dbReference type="ChEBI" id="CHEBI:18420"/>
    </cofactor>
</comment>
<comment type="activity regulation">
    <text evidence="1">Allosterically activated by ADP and other diphosphonucleosides, and allosterically inhibited by phosphoenolpyruvate.</text>
</comment>
<comment type="pathway">
    <text evidence="1">Carbohydrate degradation; glycolysis; D-glyceraldehyde 3-phosphate and glycerone phosphate from D-glucose: step 3/4.</text>
</comment>
<comment type="subunit">
    <text evidence="1">Homotetramer.</text>
</comment>
<comment type="subcellular location">
    <subcellularLocation>
        <location evidence="1">Cytoplasm</location>
    </subcellularLocation>
</comment>
<comment type="similarity">
    <text evidence="1">Belongs to the phosphofructokinase type A (PFKA) family. ATP-dependent PFK group I subfamily. Prokaryotic clade 'B1' sub-subfamily.</text>
</comment>
<organism>
    <name type="scientific">Clostridium botulinum (strain Loch Maree / Type A3)</name>
    <dbReference type="NCBI Taxonomy" id="498214"/>
    <lineage>
        <taxon>Bacteria</taxon>
        <taxon>Bacillati</taxon>
        <taxon>Bacillota</taxon>
        <taxon>Clostridia</taxon>
        <taxon>Eubacteriales</taxon>
        <taxon>Clostridiaceae</taxon>
        <taxon>Clostridium</taxon>
    </lineage>
</organism>
<sequence length="319" mass="34204">MRTIAVLTSGGDAPGMNAAIRAVVRTGLEKGLKVMGIQRGYNGLINGEIFEMDTHSVSDIIQRGGTILRTARCEEFRTEQGREKAAKILKAFGIDGLVVIGGDGSFHGAQLLSKLGINTVGLPGTIDNDLAYTDYTIGFDTSINTVLDAINKLRDTSTSHERVSVVEVMGRNCGDIALYTGVAGGAESIIIPEKEYNADKLCKQILQGKLKGKMHNLVLLAEGVGGANELAKYIEEVTGIETRSTILGHIQRGGSPTCMDRILASRMAYKAVELLISGKSSRVVGIKNGEIIDMDIDEALAVERSFDQELYDIATILSK</sequence>
<reference key="1">
    <citation type="journal article" date="2007" name="PLoS ONE">
        <title>Analysis of the neurotoxin complex genes in Clostridium botulinum A1-A4 and B1 strains: BoNT/A3, /Ba4 and /B1 clusters are located within plasmids.</title>
        <authorList>
            <person name="Smith T.J."/>
            <person name="Hill K.K."/>
            <person name="Foley B.T."/>
            <person name="Detter J.C."/>
            <person name="Munk A.C."/>
            <person name="Bruce D.C."/>
            <person name="Doggett N.A."/>
            <person name="Smith L.A."/>
            <person name="Marks J.D."/>
            <person name="Xie G."/>
            <person name="Brettin T.S."/>
        </authorList>
    </citation>
    <scope>NUCLEOTIDE SEQUENCE [LARGE SCALE GENOMIC DNA]</scope>
    <source>
        <strain>Loch Maree / Type A3</strain>
    </source>
</reference>